<sequence length="366" mass="43132">MMFVHIADNHLGYRQYNLDDREKDIYDSFKLCIKKILEIKPDVVLHSGDLFNDLRPPVKALRIAMQAFKKLHENNIKVYIVAGNHEMPRRLGEESPLALLKDYVKILDGKDVINVNGEEIFICGTYYHKKSKREEMLDKLKNFESEAKNYKKKILMLHQGINPYIPLDYELEHFDLPKFSYYALGHIHKRILERFNDGILAYSGSTEIIYRNEYEDYKKEGKGFYLVDFSGNDLDISDIEKIDIECREFVEVNIKDKKSFNEAVNKIERCKNKPVVFGKIKREFKPWFDTLKDKILINKAIIVDDEFIDMPDNVDIESLNIKELLVDYANRQGIDGDLVLSLYKALLNNENWKELLDEYYNTKFRG</sequence>
<organism>
    <name type="scientific">Methanocaldococcus jannaschii (strain ATCC 43067 / DSM 2661 / JAL-1 / JCM 10045 / NBRC 100440)</name>
    <name type="common">Methanococcus jannaschii</name>
    <dbReference type="NCBI Taxonomy" id="243232"/>
    <lineage>
        <taxon>Archaea</taxon>
        <taxon>Methanobacteriati</taxon>
        <taxon>Methanobacteriota</taxon>
        <taxon>Methanomada group</taxon>
        <taxon>Methanococci</taxon>
        <taxon>Methanococcales</taxon>
        <taxon>Methanocaldococcaceae</taxon>
        <taxon>Methanocaldococcus</taxon>
    </lineage>
</organism>
<proteinExistence type="evidence at protein level"/>
<gene>
    <name evidence="1" type="primary">mre11</name>
    <name type="ordered locus">MJ1323</name>
</gene>
<protein>
    <recommendedName>
        <fullName evidence="1">DNA double-strand break repair protein Mre11</fullName>
        <ecNumber evidence="1">3.1.-.-</ecNumber>
    </recommendedName>
</protein>
<accession>Q58719</accession>
<comment type="function">
    <text evidence="1">Part of the Rad50/Mre11 complex, which is involved in the early steps of DNA double-strand break (DSB) repair. The complex may facilitate opening of the processed DNA ends to aid in the recruitment of HerA and NurA. Mre11 binds to DSB ends and has both double-stranded 3'-5' exonuclease activity and single-stranded endonuclease activity.</text>
</comment>
<comment type="cofactor">
    <cofactor evidence="1">
        <name>Mn(2+)</name>
        <dbReference type="ChEBI" id="CHEBI:29035"/>
    </cofactor>
    <text evidence="1">Binds 2 manganese ions per subunit.</text>
</comment>
<comment type="activity regulation">
    <text evidence="1">Nuclease activity is regulated by Rad50.</text>
</comment>
<comment type="subunit">
    <text evidence="1">Homodimer. Forms a heterotetramer composed of two Mre11 subunits and two Rad50 subunits.</text>
</comment>
<comment type="interaction">
    <interactant intactId="EBI-10107692">
        <id>Q58719</id>
    </interactant>
    <interactant intactId="EBI-10107692">
        <id>Q58719</id>
        <label>mre11</label>
    </interactant>
    <organismsDiffer>false</organismsDiffer>
    <experiments>3</experiments>
</comment>
<comment type="similarity">
    <text evidence="1">Belongs to the MRE11/RAD32 family.</text>
</comment>
<name>MRE11_METJA</name>
<reference key="1">
    <citation type="journal article" date="1996" name="Science">
        <title>Complete genome sequence of the methanogenic archaeon, Methanococcus jannaschii.</title>
        <authorList>
            <person name="Bult C.J."/>
            <person name="White O."/>
            <person name="Olsen G.J."/>
            <person name="Zhou L."/>
            <person name="Fleischmann R.D."/>
            <person name="Sutton G.G."/>
            <person name="Blake J.A."/>
            <person name="FitzGerald L.M."/>
            <person name="Clayton R.A."/>
            <person name="Gocayne J.D."/>
            <person name="Kerlavage A.R."/>
            <person name="Dougherty B.A."/>
            <person name="Tomb J.-F."/>
            <person name="Adams M.D."/>
            <person name="Reich C.I."/>
            <person name="Overbeek R."/>
            <person name="Kirkness E.F."/>
            <person name="Weinstock K.G."/>
            <person name="Merrick J.M."/>
            <person name="Glodek A."/>
            <person name="Scott J.L."/>
            <person name="Geoghagen N.S.M."/>
            <person name="Weidman J.F."/>
            <person name="Fuhrmann J.L."/>
            <person name="Nguyen D."/>
            <person name="Utterback T.R."/>
            <person name="Kelley J.M."/>
            <person name="Peterson J.D."/>
            <person name="Sadow P.W."/>
            <person name="Hanna M.C."/>
            <person name="Cotton M.D."/>
            <person name="Roberts K.M."/>
            <person name="Hurst M.A."/>
            <person name="Kaine B.P."/>
            <person name="Borodovsky M."/>
            <person name="Klenk H.-P."/>
            <person name="Fraser C.M."/>
            <person name="Smith H.O."/>
            <person name="Woese C.R."/>
            <person name="Venter J.C."/>
        </authorList>
    </citation>
    <scope>NUCLEOTIDE SEQUENCE [LARGE SCALE GENOMIC DNA]</scope>
    <source>
        <strain>ATCC 43067 / DSM 2661 / JAL-1 / JCM 10045 / NBRC 100440</strain>
    </source>
</reference>
<keyword id="KW-0002">3D-structure</keyword>
<keyword id="KW-0227">DNA damage</keyword>
<keyword id="KW-0234">DNA repair</keyword>
<keyword id="KW-0255">Endonuclease</keyword>
<keyword id="KW-0269">Exonuclease</keyword>
<keyword id="KW-0378">Hydrolase</keyword>
<keyword id="KW-0464">Manganese</keyword>
<keyword id="KW-0479">Metal-binding</keyword>
<keyword id="KW-0540">Nuclease</keyword>
<keyword id="KW-1185">Reference proteome</keyword>
<feature type="chain" id="PRO_0000138689" description="DNA double-strand break repair protein Mre11">
    <location>
        <begin position="1"/>
        <end position="366"/>
    </location>
</feature>
<feature type="active site" description="Proton donor" evidence="1">
    <location>
        <position position="85"/>
    </location>
</feature>
<feature type="binding site" evidence="1">
    <location>
        <position position="8"/>
    </location>
    <ligand>
        <name>Mn(2+)</name>
        <dbReference type="ChEBI" id="CHEBI:29035"/>
        <label>1</label>
    </ligand>
</feature>
<feature type="binding site" evidence="1">
    <location>
        <position position="10"/>
    </location>
    <ligand>
        <name>Mn(2+)</name>
        <dbReference type="ChEBI" id="CHEBI:29035"/>
        <label>1</label>
    </ligand>
</feature>
<feature type="binding site" evidence="1">
    <location>
        <position position="49"/>
    </location>
    <ligand>
        <name>Mn(2+)</name>
        <dbReference type="ChEBI" id="CHEBI:29035"/>
        <label>1</label>
    </ligand>
</feature>
<feature type="binding site" evidence="1">
    <location>
        <position position="49"/>
    </location>
    <ligand>
        <name>Mn(2+)</name>
        <dbReference type="ChEBI" id="CHEBI:29035"/>
        <label>2</label>
    </ligand>
</feature>
<feature type="binding site" evidence="1">
    <location>
        <position position="84"/>
    </location>
    <ligand>
        <name>Mn(2+)</name>
        <dbReference type="ChEBI" id="CHEBI:29035"/>
        <label>2</label>
    </ligand>
</feature>
<feature type="binding site" evidence="1">
    <location>
        <position position="158"/>
    </location>
    <ligand>
        <name>Mn(2+)</name>
        <dbReference type="ChEBI" id="CHEBI:29035"/>
        <label>2</label>
    </ligand>
</feature>
<feature type="binding site" evidence="1">
    <location>
        <position position="186"/>
    </location>
    <ligand>
        <name>Mn(2+)</name>
        <dbReference type="ChEBI" id="CHEBI:29035"/>
        <label>2</label>
    </ligand>
</feature>
<feature type="binding site" evidence="1">
    <location>
        <position position="188"/>
    </location>
    <ligand>
        <name>Mn(2+)</name>
        <dbReference type="ChEBI" id="CHEBI:29035"/>
        <label>1</label>
    </ligand>
</feature>
<feature type="strand" evidence="2">
    <location>
        <begin position="2"/>
        <end position="6"/>
    </location>
</feature>
<feature type="helix" evidence="2">
    <location>
        <begin position="15"/>
        <end position="17"/>
    </location>
</feature>
<feature type="helix" evidence="2">
    <location>
        <begin position="19"/>
        <end position="37"/>
    </location>
</feature>
<feature type="strand" evidence="2">
    <location>
        <begin position="42"/>
        <end position="46"/>
    </location>
</feature>
<feature type="strand" evidence="2">
    <location>
        <begin position="50"/>
        <end position="55"/>
    </location>
</feature>
<feature type="helix" evidence="2">
    <location>
        <begin position="58"/>
        <end position="73"/>
    </location>
</feature>
<feature type="strand" evidence="2">
    <location>
        <begin position="77"/>
        <end position="80"/>
    </location>
</feature>
<feature type="helix" evidence="2">
    <location>
        <begin position="84"/>
        <end position="86"/>
    </location>
</feature>
<feature type="strand" evidence="3">
    <location>
        <begin position="89"/>
        <end position="93"/>
    </location>
</feature>
<feature type="helix" evidence="2">
    <location>
        <begin position="96"/>
        <end position="100"/>
    </location>
</feature>
<feature type="turn" evidence="2">
    <location>
        <begin position="101"/>
        <end position="103"/>
    </location>
</feature>
<feature type="strand" evidence="3">
    <location>
        <begin position="104"/>
        <end position="106"/>
    </location>
</feature>
<feature type="strand" evidence="2">
    <location>
        <begin position="108"/>
        <end position="115"/>
    </location>
</feature>
<feature type="strand" evidence="2">
    <location>
        <begin position="118"/>
        <end position="125"/>
    </location>
</feature>
<feature type="helix" evidence="3">
    <location>
        <begin position="130"/>
        <end position="132"/>
    </location>
</feature>
<feature type="helix" evidence="2">
    <location>
        <begin position="133"/>
        <end position="148"/>
    </location>
</feature>
<feature type="strand" evidence="2">
    <location>
        <begin position="151"/>
        <end position="157"/>
    </location>
</feature>
<feature type="turn" evidence="2">
    <location>
        <begin position="162"/>
        <end position="164"/>
    </location>
</feature>
<feature type="strand" evidence="2">
    <location>
        <begin position="165"/>
        <end position="168"/>
    </location>
</feature>
<feature type="helix" evidence="2">
    <location>
        <begin position="173"/>
        <end position="175"/>
    </location>
</feature>
<feature type="strand" evidence="2">
    <location>
        <begin position="180"/>
        <end position="184"/>
    </location>
</feature>
<feature type="strand" evidence="2">
    <location>
        <begin position="191"/>
        <end position="194"/>
    </location>
</feature>
<feature type="strand" evidence="2">
    <location>
        <begin position="196"/>
        <end position="202"/>
    </location>
</feature>
<feature type="helix" evidence="2">
    <location>
        <begin position="211"/>
        <end position="213"/>
    </location>
</feature>
<feature type="helix" evidence="2">
    <location>
        <begin position="215"/>
        <end position="220"/>
    </location>
</feature>
<feature type="strand" evidence="2">
    <location>
        <begin position="222"/>
        <end position="228"/>
    </location>
</feature>
<feature type="strand" evidence="2">
    <location>
        <begin position="231"/>
        <end position="233"/>
    </location>
</feature>
<feature type="helix" evidence="2">
    <location>
        <begin position="236"/>
        <end position="238"/>
    </location>
</feature>
<feature type="strand" evidence="2">
    <location>
        <begin position="239"/>
        <end position="243"/>
    </location>
</feature>
<feature type="strand" evidence="2">
    <location>
        <begin position="249"/>
        <end position="254"/>
    </location>
</feature>
<feature type="helix" evidence="2">
    <location>
        <begin position="257"/>
        <end position="267"/>
    </location>
</feature>
<feature type="strand" evidence="2">
    <location>
        <begin position="269"/>
        <end position="272"/>
    </location>
</feature>
<feature type="strand" evidence="2">
    <location>
        <begin position="275"/>
        <end position="281"/>
    </location>
</feature>
<feature type="helix" evidence="2">
    <location>
        <begin position="282"/>
        <end position="284"/>
    </location>
</feature>
<feature type="turn" evidence="2">
    <location>
        <begin position="286"/>
        <end position="288"/>
    </location>
</feature>
<feature type="helix" evidence="2">
    <location>
        <begin position="289"/>
        <end position="291"/>
    </location>
</feature>
<feature type="turn" evidence="2">
    <location>
        <begin position="292"/>
        <end position="294"/>
    </location>
</feature>
<feature type="strand" evidence="2">
    <location>
        <begin position="296"/>
        <end position="303"/>
    </location>
</feature>
<feature type="helix" evidence="2">
    <location>
        <begin position="321"/>
        <end position="332"/>
    </location>
</feature>
<feature type="helix" evidence="2">
    <location>
        <begin position="336"/>
        <end position="347"/>
    </location>
</feature>
<feature type="helix" evidence="2">
    <location>
        <begin position="352"/>
        <end position="362"/>
    </location>
</feature>
<dbReference type="EC" id="3.1.-.-" evidence="1"/>
<dbReference type="EMBL" id="L77117">
    <property type="protein sequence ID" value="AAB99332.1"/>
    <property type="molecule type" value="Genomic_DNA"/>
</dbReference>
<dbReference type="PIR" id="B64465">
    <property type="entry name" value="B64465"/>
</dbReference>
<dbReference type="RefSeq" id="WP_010870840.1">
    <property type="nucleotide sequence ID" value="NC_000909.1"/>
</dbReference>
<dbReference type="PDB" id="3AUZ">
    <property type="method" value="X-ray"/>
    <property type="resolution" value="3.21 A"/>
    <property type="chains" value="A=1-313"/>
</dbReference>
<dbReference type="PDB" id="3AV0">
    <property type="method" value="X-ray"/>
    <property type="resolution" value="3.10 A"/>
    <property type="chains" value="A=1-366"/>
</dbReference>
<dbReference type="PDB" id="4TUG">
    <property type="method" value="X-ray"/>
    <property type="resolution" value="3.55 A"/>
    <property type="chains" value="A/B/C/D/E/F=1-333"/>
</dbReference>
<dbReference type="PDB" id="4TUI">
    <property type="method" value="X-ray"/>
    <property type="resolution" value="3.59 A"/>
    <property type="chains" value="A/B/C/D/E/F=1-333"/>
</dbReference>
<dbReference type="PDB" id="5DNY">
    <property type="method" value="X-ray"/>
    <property type="resolution" value="3.11 A"/>
    <property type="chains" value="A/C=1-366"/>
</dbReference>
<dbReference type="PDB" id="5F3W">
    <property type="method" value="X-ray"/>
    <property type="resolution" value="3.11 A"/>
    <property type="chains" value="A/C=1-366"/>
</dbReference>
<dbReference type="PDBsum" id="3AUZ"/>
<dbReference type="PDBsum" id="3AV0"/>
<dbReference type="PDBsum" id="4TUG"/>
<dbReference type="PDBsum" id="4TUI"/>
<dbReference type="PDBsum" id="5DNY"/>
<dbReference type="PDBsum" id="5F3W"/>
<dbReference type="SMR" id="Q58719"/>
<dbReference type="MINT" id="Q58719"/>
<dbReference type="STRING" id="243232.MJ_1323"/>
<dbReference type="PaxDb" id="243232-MJ_1323"/>
<dbReference type="EnsemblBacteria" id="AAB99332">
    <property type="protein sequence ID" value="AAB99332"/>
    <property type="gene ID" value="MJ_1323"/>
</dbReference>
<dbReference type="GeneID" id="1452225"/>
<dbReference type="KEGG" id="mja:MJ_1323"/>
<dbReference type="eggNOG" id="arCOG00397">
    <property type="taxonomic scope" value="Archaea"/>
</dbReference>
<dbReference type="HOGENOM" id="CLU_026621_5_2_2"/>
<dbReference type="InParanoid" id="Q58719"/>
<dbReference type="OrthoDB" id="11638at2157"/>
<dbReference type="PhylomeDB" id="Q58719"/>
<dbReference type="EvolutionaryTrace" id="Q58719"/>
<dbReference type="Proteomes" id="UP000000805">
    <property type="component" value="Chromosome"/>
</dbReference>
<dbReference type="GO" id="GO:0008408">
    <property type="term" value="F:3'-5' exonuclease activity"/>
    <property type="evidence" value="ECO:0007669"/>
    <property type="project" value="UniProtKB-UniRule"/>
</dbReference>
<dbReference type="GO" id="GO:0003677">
    <property type="term" value="F:DNA binding"/>
    <property type="evidence" value="ECO:0000318"/>
    <property type="project" value="GO_Central"/>
</dbReference>
<dbReference type="GO" id="GO:0045027">
    <property type="term" value="F:DNA end binding"/>
    <property type="evidence" value="ECO:0007669"/>
    <property type="project" value="UniProtKB-UniRule"/>
</dbReference>
<dbReference type="GO" id="GO:0004529">
    <property type="term" value="F:DNA exonuclease activity"/>
    <property type="evidence" value="ECO:0000318"/>
    <property type="project" value="GO_Central"/>
</dbReference>
<dbReference type="GO" id="GO:0004519">
    <property type="term" value="F:endonuclease activity"/>
    <property type="evidence" value="ECO:0007669"/>
    <property type="project" value="UniProtKB-UniRule"/>
</dbReference>
<dbReference type="GO" id="GO:0042802">
    <property type="term" value="F:identical protein binding"/>
    <property type="evidence" value="ECO:0000353"/>
    <property type="project" value="IntAct"/>
</dbReference>
<dbReference type="GO" id="GO:0030145">
    <property type="term" value="F:manganese ion binding"/>
    <property type="evidence" value="ECO:0007669"/>
    <property type="project" value="UniProtKB-UniRule"/>
</dbReference>
<dbReference type="GO" id="GO:0000403">
    <property type="term" value="F:Y-form DNA binding"/>
    <property type="evidence" value="ECO:0007669"/>
    <property type="project" value="UniProtKB-UniRule"/>
</dbReference>
<dbReference type="GO" id="GO:0006281">
    <property type="term" value="P:DNA repair"/>
    <property type="evidence" value="ECO:0000318"/>
    <property type="project" value="GO_Central"/>
</dbReference>
<dbReference type="GO" id="GO:0006302">
    <property type="term" value="P:double-strand break repair"/>
    <property type="evidence" value="ECO:0007669"/>
    <property type="project" value="UniProtKB-UniRule"/>
</dbReference>
<dbReference type="CDD" id="cd00840">
    <property type="entry name" value="MPP_Mre11_N"/>
    <property type="match status" value="1"/>
</dbReference>
<dbReference type="FunFam" id="3.60.21.10:FF:000238">
    <property type="entry name" value="DNA double-strand break repair protein Mre11"/>
    <property type="match status" value="1"/>
</dbReference>
<dbReference type="Gene3D" id="3.30.160.600">
    <property type="match status" value="1"/>
</dbReference>
<dbReference type="Gene3D" id="3.60.21.10">
    <property type="match status" value="1"/>
</dbReference>
<dbReference type="Gene3D" id="6.10.10.50">
    <property type="entry name" value="Mre11, C-terminal domain-like"/>
    <property type="match status" value="1"/>
</dbReference>
<dbReference type="HAMAP" id="MF_02044">
    <property type="entry name" value="Mre11"/>
    <property type="match status" value="1"/>
</dbReference>
<dbReference type="InterPro" id="IPR004843">
    <property type="entry name" value="Calcineurin-like_PHP_ApaH"/>
</dbReference>
<dbReference type="InterPro" id="IPR050535">
    <property type="entry name" value="DNA_Repair-Maintenance_Comp"/>
</dbReference>
<dbReference type="InterPro" id="IPR029052">
    <property type="entry name" value="Metallo-depent_PP-like"/>
</dbReference>
<dbReference type="InterPro" id="IPR032885">
    <property type="entry name" value="Mre11_archaea-type"/>
</dbReference>
<dbReference type="InterPro" id="IPR055244">
    <property type="entry name" value="Mre11_C_arc"/>
</dbReference>
<dbReference type="InterPro" id="IPR041796">
    <property type="entry name" value="Mre11_N"/>
</dbReference>
<dbReference type="PANTHER" id="PTHR30337">
    <property type="entry name" value="COMPONENT OF ATP-DEPENDENT DSDNA EXONUCLEASE"/>
    <property type="match status" value="1"/>
</dbReference>
<dbReference type="PANTHER" id="PTHR30337:SF0">
    <property type="entry name" value="NUCLEASE SBCCD SUBUNIT D"/>
    <property type="match status" value="1"/>
</dbReference>
<dbReference type="Pfam" id="PF00149">
    <property type="entry name" value="Metallophos"/>
    <property type="match status" value="1"/>
</dbReference>
<dbReference type="Pfam" id="PF22226">
    <property type="entry name" value="Mre11_C"/>
    <property type="match status" value="1"/>
</dbReference>
<dbReference type="SUPFAM" id="SSF56300">
    <property type="entry name" value="Metallo-dependent phosphatases"/>
    <property type="match status" value="1"/>
</dbReference>
<evidence type="ECO:0000255" key="1">
    <source>
        <dbReference type="HAMAP-Rule" id="MF_02044"/>
    </source>
</evidence>
<evidence type="ECO:0007829" key="2">
    <source>
        <dbReference type="PDB" id="3AV0"/>
    </source>
</evidence>
<evidence type="ECO:0007829" key="3">
    <source>
        <dbReference type="PDB" id="5DNY"/>
    </source>
</evidence>